<protein>
    <recommendedName>
        <fullName evidence="1">Small ribosomal subunit protein uS4</fullName>
    </recommendedName>
    <alternativeName>
        <fullName evidence="3">30S ribosomal protein S4</fullName>
    </alternativeName>
</protein>
<reference key="1">
    <citation type="journal article" date="2007" name="PLoS Genet.">
        <title>Patterns and implications of gene gain and loss in the evolution of Prochlorococcus.</title>
        <authorList>
            <person name="Kettler G.C."/>
            <person name="Martiny A.C."/>
            <person name="Huang K."/>
            <person name="Zucker J."/>
            <person name="Coleman M.L."/>
            <person name="Rodrigue S."/>
            <person name="Chen F."/>
            <person name="Lapidus A."/>
            <person name="Ferriera S."/>
            <person name="Johnson J."/>
            <person name="Steglich C."/>
            <person name="Church G.M."/>
            <person name="Richardson P."/>
            <person name="Chisholm S.W."/>
        </authorList>
    </citation>
    <scope>NUCLEOTIDE SEQUENCE [LARGE SCALE GENOMIC DNA]</scope>
    <source>
        <strain>MIT 9215</strain>
    </source>
</reference>
<evidence type="ECO:0000255" key="1">
    <source>
        <dbReference type="HAMAP-Rule" id="MF_01306"/>
    </source>
</evidence>
<evidence type="ECO:0000256" key="2">
    <source>
        <dbReference type="SAM" id="MobiDB-lite"/>
    </source>
</evidence>
<evidence type="ECO:0000305" key="3"/>
<organism>
    <name type="scientific">Prochlorococcus marinus (strain MIT 9215)</name>
    <dbReference type="NCBI Taxonomy" id="93060"/>
    <lineage>
        <taxon>Bacteria</taxon>
        <taxon>Bacillati</taxon>
        <taxon>Cyanobacteriota</taxon>
        <taxon>Cyanophyceae</taxon>
        <taxon>Synechococcales</taxon>
        <taxon>Prochlorococcaceae</taxon>
        <taxon>Prochlorococcus</taxon>
    </lineage>
</organism>
<proteinExistence type="inferred from homology"/>
<keyword id="KW-0687">Ribonucleoprotein</keyword>
<keyword id="KW-0689">Ribosomal protein</keyword>
<keyword id="KW-0694">RNA-binding</keyword>
<keyword id="KW-0699">rRNA-binding</keyword>
<name>RS4_PROM2</name>
<dbReference type="EMBL" id="CP000825">
    <property type="protein sequence ID" value="ABV50102.1"/>
    <property type="molecule type" value="Genomic_DNA"/>
</dbReference>
<dbReference type="RefSeq" id="WP_011817920.1">
    <property type="nucleotide sequence ID" value="NC_009840.1"/>
</dbReference>
<dbReference type="SMR" id="A8G3C1"/>
<dbReference type="STRING" id="93060.P9215_04861"/>
<dbReference type="KEGG" id="pmh:P9215_04861"/>
<dbReference type="eggNOG" id="COG0522">
    <property type="taxonomic scope" value="Bacteria"/>
</dbReference>
<dbReference type="HOGENOM" id="CLU_092403_0_5_3"/>
<dbReference type="OrthoDB" id="9803672at2"/>
<dbReference type="Proteomes" id="UP000002014">
    <property type="component" value="Chromosome"/>
</dbReference>
<dbReference type="GO" id="GO:0015935">
    <property type="term" value="C:small ribosomal subunit"/>
    <property type="evidence" value="ECO:0007669"/>
    <property type="project" value="InterPro"/>
</dbReference>
<dbReference type="GO" id="GO:0019843">
    <property type="term" value="F:rRNA binding"/>
    <property type="evidence" value="ECO:0007669"/>
    <property type="project" value="UniProtKB-UniRule"/>
</dbReference>
<dbReference type="GO" id="GO:0003735">
    <property type="term" value="F:structural constituent of ribosome"/>
    <property type="evidence" value="ECO:0007669"/>
    <property type="project" value="InterPro"/>
</dbReference>
<dbReference type="GO" id="GO:0042274">
    <property type="term" value="P:ribosomal small subunit biogenesis"/>
    <property type="evidence" value="ECO:0007669"/>
    <property type="project" value="TreeGrafter"/>
</dbReference>
<dbReference type="GO" id="GO:0006412">
    <property type="term" value="P:translation"/>
    <property type="evidence" value="ECO:0007669"/>
    <property type="project" value="UniProtKB-UniRule"/>
</dbReference>
<dbReference type="CDD" id="cd00165">
    <property type="entry name" value="S4"/>
    <property type="match status" value="1"/>
</dbReference>
<dbReference type="FunFam" id="3.10.290.10:FF:000001">
    <property type="entry name" value="30S ribosomal protein S4"/>
    <property type="match status" value="1"/>
</dbReference>
<dbReference type="FunFam" id="1.10.1050.10:FF:000002">
    <property type="entry name" value="30S ribosomal protein S4, chloroplastic"/>
    <property type="match status" value="1"/>
</dbReference>
<dbReference type="Gene3D" id="1.10.1050.10">
    <property type="entry name" value="Ribosomal Protein S4 Delta 41, Chain A, domain 1"/>
    <property type="match status" value="1"/>
</dbReference>
<dbReference type="Gene3D" id="3.10.290.10">
    <property type="entry name" value="RNA-binding S4 domain"/>
    <property type="match status" value="1"/>
</dbReference>
<dbReference type="HAMAP" id="MF_01306_B">
    <property type="entry name" value="Ribosomal_uS4_B"/>
    <property type="match status" value="1"/>
</dbReference>
<dbReference type="InterPro" id="IPR022801">
    <property type="entry name" value="Ribosomal_uS4"/>
</dbReference>
<dbReference type="InterPro" id="IPR005709">
    <property type="entry name" value="Ribosomal_uS4_bac-type"/>
</dbReference>
<dbReference type="InterPro" id="IPR018079">
    <property type="entry name" value="Ribosomal_uS4_CS"/>
</dbReference>
<dbReference type="InterPro" id="IPR001912">
    <property type="entry name" value="Ribosomal_uS4_N"/>
</dbReference>
<dbReference type="InterPro" id="IPR002942">
    <property type="entry name" value="S4_RNA-bd"/>
</dbReference>
<dbReference type="InterPro" id="IPR036986">
    <property type="entry name" value="S4_RNA-bd_sf"/>
</dbReference>
<dbReference type="NCBIfam" id="NF003717">
    <property type="entry name" value="PRK05327.1"/>
    <property type="match status" value="1"/>
</dbReference>
<dbReference type="NCBIfam" id="TIGR01017">
    <property type="entry name" value="rpsD_bact"/>
    <property type="match status" value="1"/>
</dbReference>
<dbReference type="PANTHER" id="PTHR11831">
    <property type="entry name" value="30S 40S RIBOSOMAL PROTEIN"/>
    <property type="match status" value="1"/>
</dbReference>
<dbReference type="PANTHER" id="PTHR11831:SF4">
    <property type="entry name" value="SMALL RIBOSOMAL SUBUNIT PROTEIN US4M"/>
    <property type="match status" value="1"/>
</dbReference>
<dbReference type="Pfam" id="PF00163">
    <property type="entry name" value="Ribosomal_S4"/>
    <property type="match status" value="1"/>
</dbReference>
<dbReference type="Pfam" id="PF01479">
    <property type="entry name" value="S4"/>
    <property type="match status" value="1"/>
</dbReference>
<dbReference type="SMART" id="SM01390">
    <property type="entry name" value="Ribosomal_S4"/>
    <property type="match status" value="1"/>
</dbReference>
<dbReference type="SMART" id="SM00363">
    <property type="entry name" value="S4"/>
    <property type="match status" value="1"/>
</dbReference>
<dbReference type="SUPFAM" id="SSF55174">
    <property type="entry name" value="Alpha-L RNA-binding motif"/>
    <property type="match status" value="1"/>
</dbReference>
<dbReference type="PROSITE" id="PS00632">
    <property type="entry name" value="RIBOSOMAL_S4"/>
    <property type="match status" value="1"/>
</dbReference>
<dbReference type="PROSITE" id="PS50889">
    <property type="entry name" value="S4"/>
    <property type="match status" value="1"/>
</dbReference>
<accession>A8G3C1</accession>
<sequence>MSRYRGPRLRVTRRLGELPGLTRKASKKSNPPGQHGQARRKRSEYAIRLEEKQKLRFNYGVSEKQLVRYVKKARAQEGSTGTNLLRLLENRLDNVCFRLGFGGTIPGSRQLVNHGHVTVNGKVLDIAGYQCKSGDVIGIKENKASKKLVEGNIEFPGLANVPPHLDLDKPKLTGKINGKCDREWVALEINELLVVEYYSRKV</sequence>
<comment type="function">
    <text evidence="1">One of the primary rRNA binding proteins, it binds directly to 16S rRNA where it nucleates assembly of the body of the 30S subunit.</text>
</comment>
<comment type="function">
    <text evidence="1">With S5 and S12 plays an important role in translational accuracy.</text>
</comment>
<comment type="subunit">
    <text evidence="1">Part of the 30S ribosomal subunit. Contacts protein S5. The interaction surface between S4 and S5 is involved in control of translational fidelity.</text>
</comment>
<comment type="similarity">
    <text evidence="1">Belongs to the universal ribosomal protein uS4 family.</text>
</comment>
<gene>
    <name evidence="1" type="primary">rpsD</name>
    <name evidence="1" type="synonym">rps4</name>
    <name type="ordered locus">P9215_04861</name>
</gene>
<feature type="chain" id="PRO_0000322318" description="Small ribosomal subunit protein uS4">
    <location>
        <begin position="1"/>
        <end position="202"/>
    </location>
</feature>
<feature type="domain" description="S4 RNA-binding" evidence="1">
    <location>
        <begin position="90"/>
        <end position="152"/>
    </location>
</feature>
<feature type="region of interest" description="Disordered" evidence="2">
    <location>
        <begin position="1"/>
        <end position="42"/>
    </location>
</feature>
<feature type="compositionally biased region" description="Basic residues" evidence="2">
    <location>
        <begin position="1"/>
        <end position="13"/>
    </location>
</feature>